<reference key="1">
    <citation type="journal article" date="1997" name="Biochem. Biophys. Res. Commun.">
        <title>Characterization of a cDNA encoding Arabidopsis thaliana inositol 1,3,4-trisphosphate 5/6-kinase.</title>
        <authorList>
            <person name="Wilson M.P."/>
            <person name="Majerus P.W."/>
        </authorList>
    </citation>
    <scope>NUCLEOTIDE SEQUENCE [MRNA]</scope>
    <scope>ENZYME ACTIVITY</scope>
</reference>
<reference key="2">
    <citation type="submission" date="1997-09" db="EMBL/GenBank/DDBJ databases">
        <authorList>
            <person name="Xue H."/>
            <person name="Mueller-Roeber B."/>
        </authorList>
    </citation>
    <scope>NUCLEOTIDE SEQUENCE [MRNA]</scope>
</reference>
<reference key="3">
    <citation type="journal article" date="2000" name="Nature">
        <title>Sequence and analysis of chromosome 5 of the plant Arabidopsis thaliana.</title>
        <authorList>
            <person name="Tabata S."/>
            <person name="Kaneko T."/>
            <person name="Nakamura Y."/>
            <person name="Kotani H."/>
            <person name="Kato T."/>
            <person name="Asamizu E."/>
            <person name="Miyajima N."/>
            <person name="Sasamoto S."/>
            <person name="Kimura T."/>
            <person name="Hosouchi T."/>
            <person name="Kawashima K."/>
            <person name="Kohara M."/>
            <person name="Matsumoto M."/>
            <person name="Matsuno A."/>
            <person name="Muraki A."/>
            <person name="Nakayama S."/>
            <person name="Nakazaki N."/>
            <person name="Naruo K."/>
            <person name="Okumura S."/>
            <person name="Shinpo S."/>
            <person name="Takeuchi C."/>
            <person name="Wada T."/>
            <person name="Watanabe A."/>
            <person name="Yamada M."/>
            <person name="Yasuda M."/>
            <person name="Sato S."/>
            <person name="de la Bastide M."/>
            <person name="Huang E."/>
            <person name="Spiegel L."/>
            <person name="Gnoj L."/>
            <person name="O'Shaughnessy A."/>
            <person name="Preston R."/>
            <person name="Habermann K."/>
            <person name="Murray J."/>
            <person name="Johnson D."/>
            <person name="Rohlfing T."/>
            <person name="Nelson J."/>
            <person name="Stoneking T."/>
            <person name="Pepin K."/>
            <person name="Spieth J."/>
            <person name="Sekhon M."/>
            <person name="Armstrong J."/>
            <person name="Becker M."/>
            <person name="Belter E."/>
            <person name="Cordum H."/>
            <person name="Cordes M."/>
            <person name="Courtney L."/>
            <person name="Courtney W."/>
            <person name="Dante M."/>
            <person name="Du H."/>
            <person name="Edwards J."/>
            <person name="Fryman J."/>
            <person name="Haakensen B."/>
            <person name="Lamar E."/>
            <person name="Latreille P."/>
            <person name="Leonard S."/>
            <person name="Meyer R."/>
            <person name="Mulvaney E."/>
            <person name="Ozersky P."/>
            <person name="Riley A."/>
            <person name="Strowmatt C."/>
            <person name="Wagner-McPherson C."/>
            <person name="Wollam A."/>
            <person name="Yoakum M."/>
            <person name="Bell M."/>
            <person name="Dedhia N."/>
            <person name="Parnell L."/>
            <person name="Shah R."/>
            <person name="Rodriguez M."/>
            <person name="Hoon See L."/>
            <person name="Vil D."/>
            <person name="Baker J."/>
            <person name="Kirchoff K."/>
            <person name="Toth K."/>
            <person name="King L."/>
            <person name="Bahret A."/>
            <person name="Miller B."/>
            <person name="Marra M.A."/>
            <person name="Martienssen R."/>
            <person name="McCombie W.R."/>
            <person name="Wilson R.K."/>
            <person name="Murphy G."/>
            <person name="Bancroft I."/>
            <person name="Volckaert G."/>
            <person name="Wambutt R."/>
            <person name="Duesterhoeft A."/>
            <person name="Stiekema W."/>
            <person name="Pohl T."/>
            <person name="Entian K.-D."/>
            <person name="Terryn N."/>
            <person name="Hartley N."/>
            <person name="Bent E."/>
            <person name="Johnson S."/>
            <person name="Langham S.-A."/>
            <person name="McCullagh B."/>
            <person name="Robben J."/>
            <person name="Grymonprez B."/>
            <person name="Zimmermann W."/>
            <person name="Ramsperger U."/>
            <person name="Wedler H."/>
            <person name="Balke K."/>
            <person name="Wedler E."/>
            <person name="Peters S."/>
            <person name="van Staveren M."/>
            <person name="Dirkse W."/>
            <person name="Mooijman P."/>
            <person name="Klein Lankhorst R."/>
            <person name="Weitzenegger T."/>
            <person name="Bothe G."/>
            <person name="Rose M."/>
            <person name="Hauf J."/>
            <person name="Berneiser S."/>
            <person name="Hempel S."/>
            <person name="Feldpausch M."/>
            <person name="Lamberth S."/>
            <person name="Villarroel R."/>
            <person name="Gielen J."/>
            <person name="Ardiles W."/>
            <person name="Bents O."/>
            <person name="Lemcke K."/>
            <person name="Kolesov G."/>
            <person name="Mayer K.F.X."/>
            <person name="Rudd S."/>
            <person name="Schoof H."/>
            <person name="Schueller C."/>
            <person name="Zaccaria P."/>
            <person name="Mewes H.-W."/>
            <person name="Bevan M."/>
            <person name="Fransz P.F."/>
        </authorList>
    </citation>
    <scope>NUCLEOTIDE SEQUENCE [LARGE SCALE GENOMIC DNA]</scope>
    <source>
        <strain>cv. Columbia</strain>
    </source>
</reference>
<reference key="4">
    <citation type="journal article" date="2017" name="Plant J.">
        <title>Araport11: a complete reannotation of the Arabidopsis thaliana reference genome.</title>
        <authorList>
            <person name="Cheng C.Y."/>
            <person name="Krishnakumar V."/>
            <person name="Chan A.P."/>
            <person name="Thibaud-Nissen F."/>
            <person name="Schobel S."/>
            <person name="Town C.D."/>
        </authorList>
    </citation>
    <scope>GENOME REANNOTATION</scope>
    <source>
        <strain>cv. Columbia</strain>
    </source>
</reference>
<reference key="5">
    <citation type="journal article" date="2003" name="Science">
        <title>Empirical analysis of transcriptional activity in the Arabidopsis genome.</title>
        <authorList>
            <person name="Yamada K."/>
            <person name="Lim J."/>
            <person name="Dale J.M."/>
            <person name="Chen H."/>
            <person name="Shinn P."/>
            <person name="Palm C.J."/>
            <person name="Southwick A.M."/>
            <person name="Wu H.C."/>
            <person name="Kim C.J."/>
            <person name="Nguyen M."/>
            <person name="Pham P.K."/>
            <person name="Cheuk R.F."/>
            <person name="Karlin-Newmann G."/>
            <person name="Liu S.X."/>
            <person name="Lam B."/>
            <person name="Sakano H."/>
            <person name="Wu T."/>
            <person name="Yu G."/>
            <person name="Miranda M."/>
            <person name="Quach H.L."/>
            <person name="Tripp M."/>
            <person name="Chang C.H."/>
            <person name="Lee J.M."/>
            <person name="Toriumi M.J."/>
            <person name="Chan M.M."/>
            <person name="Tang C.C."/>
            <person name="Onodera C.S."/>
            <person name="Deng J.M."/>
            <person name="Akiyama K."/>
            <person name="Ansari Y."/>
            <person name="Arakawa T."/>
            <person name="Banh J."/>
            <person name="Banno F."/>
            <person name="Bowser L."/>
            <person name="Brooks S.Y."/>
            <person name="Carninci P."/>
            <person name="Chao Q."/>
            <person name="Choy N."/>
            <person name="Enju A."/>
            <person name="Goldsmith A.D."/>
            <person name="Gurjal M."/>
            <person name="Hansen N.F."/>
            <person name="Hayashizaki Y."/>
            <person name="Johnson-Hopson C."/>
            <person name="Hsuan V.W."/>
            <person name="Iida K."/>
            <person name="Karnes M."/>
            <person name="Khan S."/>
            <person name="Koesema E."/>
            <person name="Ishida J."/>
            <person name="Jiang P.X."/>
            <person name="Jones T."/>
            <person name="Kawai J."/>
            <person name="Kamiya A."/>
            <person name="Meyers C."/>
            <person name="Nakajima M."/>
            <person name="Narusaka M."/>
            <person name="Seki M."/>
            <person name="Sakurai T."/>
            <person name="Satou M."/>
            <person name="Tamse R."/>
            <person name="Vaysberg M."/>
            <person name="Wallender E.K."/>
            <person name="Wong C."/>
            <person name="Yamamura Y."/>
            <person name="Yuan S."/>
            <person name="Shinozaki K."/>
            <person name="Davis R.W."/>
            <person name="Theologis A."/>
            <person name="Ecker J.R."/>
        </authorList>
    </citation>
    <scope>NUCLEOTIDE SEQUENCE [LARGE SCALE MRNA]</scope>
    <source>
        <strain>cv. Columbia</strain>
    </source>
</reference>
<reference key="6">
    <citation type="submission" date="2002-03" db="EMBL/GenBank/DDBJ databases">
        <title>Full-length cDNA from Arabidopsis thaliana.</title>
        <authorList>
            <person name="Brover V.V."/>
            <person name="Troukhan M.E."/>
            <person name="Alexandrov N.A."/>
            <person name="Lu Y.-P."/>
            <person name="Flavell R.B."/>
            <person name="Feldmann K.A."/>
        </authorList>
    </citation>
    <scope>NUCLEOTIDE SEQUENCE [LARGE SCALE MRNA]</scope>
</reference>
<reference key="7">
    <citation type="journal article" date="2011" name="Mol. Genet. Genomics">
        <title>Identification of genes necessary for wild-type levels of seed phytic acid in Arabidopsis thaliana using a reverse genetics approach.</title>
        <authorList>
            <person name="Kim S.I."/>
            <person name="Tai T.H."/>
        </authorList>
    </citation>
    <scope>DISRUPTION PHENOTYPE</scope>
</reference>
<reference key="8">
    <citation type="journal article" date="2012" name="Mol. Cell. Proteomics">
        <title>Comparative large-scale characterisation of plant vs. mammal proteins reveals similar and idiosyncratic N-alpha acetylation features.</title>
        <authorList>
            <person name="Bienvenut W.V."/>
            <person name="Sumpton D."/>
            <person name="Martinez A."/>
            <person name="Lilla S."/>
            <person name="Espagne C."/>
            <person name="Meinnel T."/>
            <person name="Giglione C."/>
        </authorList>
    </citation>
    <scope>ACETYLATION [LARGE SCALE ANALYSIS] AT SER-2</scope>
    <scope>CLEAVAGE OF INITIATOR METHIONINE [LARGE SCALE ANALYSIS]</scope>
    <scope>IDENTIFICATION BY MASS SPECTROMETRY [LARGE SCALE ANALYSIS]</scope>
</reference>
<reference key="9">
    <citation type="journal article" date="2013" name="Acta Biochim. Biophys. Sin.">
        <title>Arabidopsis inositol 1,3,4-trisphosphate 5/6 kinase 2 is required for seed coat development.</title>
        <authorList>
            <person name="Tang Y."/>
            <person name="Tan S."/>
            <person name="Xue H."/>
        </authorList>
    </citation>
    <scope>TISSUE SPECIFICITY</scope>
</reference>
<gene>
    <name type="primary">ITPK1</name>
    <name type="ordered locus">At5g16760</name>
    <name type="ORF">F5E19.100</name>
</gene>
<accession>Q9SBA5</accession>
<accession>O81633</accession>
<keyword id="KW-0007">Acetylation</keyword>
<keyword id="KW-0067">ATP-binding</keyword>
<keyword id="KW-0418">Kinase</keyword>
<keyword id="KW-0460">Magnesium</keyword>
<keyword id="KW-0479">Metal-binding</keyword>
<keyword id="KW-0547">Nucleotide-binding</keyword>
<keyword id="KW-1185">Reference proteome</keyword>
<keyword id="KW-0808">Transferase</keyword>
<organism>
    <name type="scientific">Arabidopsis thaliana</name>
    <name type="common">Mouse-ear cress</name>
    <dbReference type="NCBI Taxonomy" id="3702"/>
    <lineage>
        <taxon>Eukaryota</taxon>
        <taxon>Viridiplantae</taxon>
        <taxon>Streptophyta</taxon>
        <taxon>Embryophyta</taxon>
        <taxon>Tracheophyta</taxon>
        <taxon>Spermatophyta</taxon>
        <taxon>Magnoliopsida</taxon>
        <taxon>eudicotyledons</taxon>
        <taxon>Gunneridae</taxon>
        <taxon>Pentapetalae</taxon>
        <taxon>rosids</taxon>
        <taxon>malvids</taxon>
        <taxon>Brassicales</taxon>
        <taxon>Brassicaceae</taxon>
        <taxon>Camelineae</taxon>
        <taxon>Arabidopsis</taxon>
    </lineage>
</organism>
<proteinExistence type="evidence at protein level"/>
<protein>
    <recommendedName>
        <fullName>Inositol-tetrakisphosphate 1-kinase 1</fullName>
        <ecNumber evidence="7">2.7.1.134</ecNumber>
    </recommendedName>
    <alternativeName>
        <fullName>Inositol 1,3,4-trisphosphate 5/6-kinase 1</fullName>
        <shortName>AtItpk-1</shortName>
        <shortName>Inositol-triphosphate 5/6-kinase 1</shortName>
        <shortName>Ins(1,3,4)P(3) 5/6-kinase 1</shortName>
        <ecNumber evidence="6">2.7.1.159</ecNumber>
    </alternativeName>
</protein>
<evidence type="ECO:0000250" key="1">
    <source>
        <dbReference type="UniProtKB" id="Q13572"/>
    </source>
</evidence>
<evidence type="ECO:0000250" key="2">
    <source>
        <dbReference type="UniProtKB" id="Q9XYQ1"/>
    </source>
</evidence>
<evidence type="ECO:0000255" key="3">
    <source>
        <dbReference type="PROSITE-ProRule" id="PRU00409"/>
    </source>
</evidence>
<evidence type="ECO:0000269" key="4">
    <source>
    </source>
</evidence>
<evidence type="ECO:0000269" key="5">
    <source>
    </source>
</evidence>
<evidence type="ECO:0000269" key="6">
    <source>
    </source>
</evidence>
<evidence type="ECO:0000305" key="7"/>
<evidence type="ECO:0007744" key="8">
    <source>
    </source>
</evidence>
<comment type="function">
    <text evidence="1 6">Kinase that can phosphorylate various inositol polyphosphate such as Ins(3,4,5,6)P4 or Ins(1,3,4)P3. Phosphorylates Ins(3,4,5,6)P4 at position 1 to form Ins(1,3,4,5,6)P5. This reaction is thought to have regulatory importance, since Ins(3,4,5,6)P4 is an inhibitor of plasma membrane Ca(2+)-activated Cl(-) channels, while Ins(1,3,4,5,6)P5 is not (By similarity). Also phosphorylates Ins(1,3,4)P3 on O-5 and O-6 to form Ins(1,3,4,6)P4, an essential molecule in the hexakisphosphate (InsP6) pathway (PubMed:9126335).</text>
</comment>
<comment type="catalytic activity">
    <reaction evidence="7">
        <text>1D-myo-inositol 3,4,5,6-tetrakisphosphate + ATP = 1D-myo-inositol 1,3,4,5,6-pentakisphosphate + ADP + H(+)</text>
        <dbReference type="Rhea" id="RHEA:12452"/>
        <dbReference type="ChEBI" id="CHEBI:15378"/>
        <dbReference type="ChEBI" id="CHEBI:30616"/>
        <dbReference type="ChEBI" id="CHEBI:57539"/>
        <dbReference type="ChEBI" id="CHEBI:57733"/>
        <dbReference type="ChEBI" id="CHEBI:456216"/>
        <dbReference type="EC" id="2.7.1.134"/>
    </reaction>
</comment>
<comment type="catalytic activity">
    <reaction evidence="7">
        <text>1D-myo-inositol 1,3,4-trisphosphate + ATP = 1D-myo-inositol 1,3,4,5-tetrakisphosphate + ADP + H(+)</text>
        <dbReference type="Rhea" id="RHEA:13253"/>
        <dbReference type="ChEBI" id="CHEBI:15378"/>
        <dbReference type="ChEBI" id="CHEBI:30616"/>
        <dbReference type="ChEBI" id="CHEBI:57895"/>
        <dbReference type="ChEBI" id="CHEBI:58414"/>
        <dbReference type="ChEBI" id="CHEBI:456216"/>
        <dbReference type="EC" id="2.7.1.159"/>
    </reaction>
</comment>
<comment type="catalytic activity">
    <reaction evidence="6">
        <text>1D-myo-inositol 1,3,4-trisphosphate + ATP = 1D-myo-inositol 1,3,4,6-tetrakisphosphate + ADP + H(+)</text>
        <dbReference type="Rhea" id="RHEA:20940"/>
        <dbReference type="ChEBI" id="CHEBI:15378"/>
        <dbReference type="ChEBI" id="CHEBI:30616"/>
        <dbReference type="ChEBI" id="CHEBI:57660"/>
        <dbReference type="ChEBI" id="CHEBI:58414"/>
        <dbReference type="ChEBI" id="CHEBI:456216"/>
        <dbReference type="EC" id="2.7.1.159"/>
    </reaction>
</comment>
<comment type="cofactor">
    <cofactor evidence="1">
        <name>Mg(2+)</name>
        <dbReference type="ChEBI" id="CHEBI:18420"/>
    </cofactor>
    <text evidence="1">Binds 2 magnesium ions per subunit.</text>
</comment>
<comment type="subunit">
    <text evidence="1">Monomer.</text>
</comment>
<comment type="tissue specificity">
    <text evidence="5">Expressed in siliques.</text>
</comment>
<comment type="disruption phenotype">
    <text evidence="4">Low inositol hexakisphosphate (phytate) levels in seed tissue.</text>
</comment>
<comment type="similarity">
    <text evidence="7">Belongs to the ITPK1 family.</text>
</comment>
<dbReference type="EC" id="2.7.1.134" evidence="7"/>
<dbReference type="EC" id="2.7.1.159" evidence="6"/>
<dbReference type="EMBL" id="AF080173">
    <property type="protein sequence ID" value="AAC28859.1"/>
    <property type="molecule type" value="mRNA"/>
</dbReference>
<dbReference type="EMBL" id="AJ001753">
    <property type="protein sequence ID" value="CAA04976.1"/>
    <property type="molecule type" value="mRNA"/>
</dbReference>
<dbReference type="EMBL" id="AL391147">
    <property type="protein sequence ID" value="CAC01840.1"/>
    <property type="molecule type" value="Genomic_DNA"/>
</dbReference>
<dbReference type="EMBL" id="CP002688">
    <property type="protein sequence ID" value="AED92334.1"/>
    <property type="molecule type" value="Genomic_DNA"/>
</dbReference>
<dbReference type="EMBL" id="AY072156">
    <property type="protein sequence ID" value="AAL59978.1"/>
    <property type="molecule type" value="mRNA"/>
</dbReference>
<dbReference type="EMBL" id="AY096412">
    <property type="protein sequence ID" value="AAM20052.1"/>
    <property type="molecule type" value="mRNA"/>
</dbReference>
<dbReference type="EMBL" id="AY087024">
    <property type="protein sequence ID" value="AAM64585.1"/>
    <property type="molecule type" value="mRNA"/>
</dbReference>
<dbReference type="PIR" id="JC5401">
    <property type="entry name" value="JC5401"/>
</dbReference>
<dbReference type="RefSeq" id="NP_197178.1">
    <property type="nucleotide sequence ID" value="NM_121682.3"/>
</dbReference>
<dbReference type="SMR" id="Q9SBA5"/>
<dbReference type="BioGRID" id="16815">
    <property type="interactions" value="1"/>
</dbReference>
<dbReference type="FunCoup" id="Q9SBA5">
    <property type="interactions" value="1893"/>
</dbReference>
<dbReference type="STRING" id="3702.Q9SBA5"/>
<dbReference type="iPTMnet" id="Q9SBA5"/>
<dbReference type="PaxDb" id="3702-AT5G16760.1"/>
<dbReference type="ProteomicsDB" id="232282"/>
<dbReference type="DNASU" id="831539"/>
<dbReference type="EnsemblPlants" id="AT5G16760.1">
    <property type="protein sequence ID" value="AT5G16760.1"/>
    <property type="gene ID" value="AT5G16760"/>
</dbReference>
<dbReference type="GeneID" id="831539"/>
<dbReference type="Gramene" id="AT5G16760.1">
    <property type="protein sequence ID" value="AT5G16760.1"/>
    <property type="gene ID" value="AT5G16760"/>
</dbReference>
<dbReference type="KEGG" id="ath:AT5G16760"/>
<dbReference type="Araport" id="AT5G16760"/>
<dbReference type="TAIR" id="AT5G16760">
    <property type="gene designation" value="ITPK1"/>
</dbReference>
<dbReference type="eggNOG" id="ENOG502QQS1">
    <property type="taxonomic scope" value="Eukaryota"/>
</dbReference>
<dbReference type="HOGENOM" id="CLU_041857_0_0_1"/>
<dbReference type="InParanoid" id="Q9SBA5"/>
<dbReference type="OMA" id="ESCSHLT"/>
<dbReference type="OrthoDB" id="25308at2759"/>
<dbReference type="PhylomeDB" id="Q9SBA5"/>
<dbReference type="BioCyc" id="ARA:AT5G16760-MONOMER"/>
<dbReference type="BioCyc" id="MetaCyc:AT5G16760-MONOMER"/>
<dbReference type="BRENDA" id="2.7.1.134">
    <property type="organism ID" value="399"/>
</dbReference>
<dbReference type="BRENDA" id="2.7.1.159">
    <property type="organism ID" value="399"/>
</dbReference>
<dbReference type="CD-CODE" id="4299E36E">
    <property type="entry name" value="Nucleolus"/>
</dbReference>
<dbReference type="PRO" id="PR:Q9SBA5"/>
<dbReference type="Proteomes" id="UP000006548">
    <property type="component" value="Chromosome 5"/>
</dbReference>
<dbReference type="ExpressionAtlas" id="Q9SBA5">
    <property type="expression patterns" value="baseline and differential"/>
</dbReference>
<dbReference type="GO" id="GO:0005524">
    <property type="term" value="F:ATP binding"/>
    <property type="evidence" value="ECO:0007669"/>
    <property type="project" value="UniProtKB-KW"/>
</dbReference>
<dbReference type="GO" id="GO:0052726">
    <property type="term" value="F:inositol-1,3,4-trisphosphate 5-kinase activity"/>
    <property type="evidence" value="ECO:0000314"/>
    <property type="project" value="TAIR"/>
</dbReference>
<dbReference type="GO" id="GO:0052725">
    <property type="term" value="F:inositol-1,3,4-trisphosphate 6-kinase activity"/>
    <property type="evidence" value="ECO:0000314"/>
    <property type="project" value="TAIR"/>
</dbReference>
<dbReference type="GO" id="GO:0047325">
    <property type="term" value="F:inositol-3,4,5,6-tetrakisphosphate 1-kinase activity"/>
    <property type="evidence" value="ECO:0007669"/>
    <property type="project" value="UniProtKB-EC"/>
</dbReference>
<dbReference type="GO" id="GO:0000287">
    <property type="term" value="F:magnesium ion binding"/>
    <property type="evidence" value="ECO:0007669"/>
    <property type="project" value="InterPro"/>
</dbReference>
<dbReference type="GO" id="GO:0032957">
    <property type="term" value="P:inositol trisphosphate metabolic process"/>
    <property type="evidence" value="ECO:0007669"/>
    <property type="project" value="InterPro"/>
</dbReference>
<dbReference type="GO" id="GO:0010264">
    <property type="term" value="P:myo-inositol hexakisphosphate biosynthetic process"/>
    <property type="evidence" value="ECO:0000315"/>
    <property type="project" value="TAIR"/>
</dbReference>
<dbReference type="FunFam" id="3.30.470.20:FF:000056">
    <property type="entry name" value="Inositol-tetrakisphosphate 1-kinase"/>
    <property type="match status" value="1"/>
</dbReference>
<dbReference type="Gene3D" id="3.30.470.20">
    <property type="entry name" value="ATP-grasp fold, B domain"/>
    <property type="match status" value="1"/>
</dbReference>
<dbReference type="InterPro" id="IPR011761">
    <property type="entry name" value="ATP-grasp"/>
</dbReference>
<dbReference type="InterPro" id="IPR008656">
    <property type="entry name" value="Inositol_tetrakis-P_1-kinase"/>
</dbReference>
<dbReference type="InterPro" id="IPR040464">
    <property type="entry name" value="InsP(3)kin_ATP-grasp"/>
</dbReference>
<dbReference type="InterPro" id="IPR041429">
    <property type="entry name" value="ITPK1_N"/>
</dbReference>
<dbReference type="PANTHER" id="PTHR14217">
    <property type="entry name" value="INOSITOL-TETRAKISPHOSPHATE 1-KINASE"/>
    <property type="match status" value="1"/>
</dbReference>
<dbReference type="PANTHER" id="PTHR14217:SF24">
    <property type="entry name" value="INOSITOL-TETRAKISPHOSPHATE 1-KINASE 1"/>
    <property type="match status" value="1"/>
</dbReference>
<dbReference type="Pfam" id="PF05770">
    <property type="entry name" value="Ins134_P3_kin"/>
    <property type="match status" value="1"/>
</dbReference>
<dbReference type="Pfam" id="PF17927">
    <property type="entry name" value="Ins134_P3_kin_N"/>
    <property type="match status" value="1"/>
</dbReference>
<dbReference type="PIRSF" id="PIRSF038186">
    <property type="entry name" value="ITPK"/>
    <property type="match status" value="1"/>
</dbReference>
<dbReference type="SUPFAM" id="SSF56059">
    <property type="entry name" value="Glutathione synthetase ATP-binding domain-like"/>
    <property type="match status" value="1"/>
</dbReference>
<dbReference type="PROSITE" id="PS50975">
    <property type="entry name" value="ATP_GRASP"/>
    <property type="match status" value="1"/>
</dbReference>
<sequence length="319" mass="36220">MSDSIQERYLVGYALAAKKQHSFIQPSLIEHSRQRGIDLVKLDPTKSLLEQGKLDCIIHKLYDVYWKENLHEFREKCPGVPVIDLPEAIERLHNRVSMLEVITQLRFPVSDSERFGVPEQVVVMDSSVLSGGGALGELKFPVIAKPLDADGSAKSHKMFLIYDQEGMKILKAPIVLQEFVNHGGVIFKVYVVGDHVKCVKRRSLPDISEEKIGTSKGSLPFSQISNLTAQEDKNIEYGEDRSLEKVEMPPLSFLTDLAKAMRESMGLNLFNFDVIRDAKDANRYLIIDINYFPGYAKMPSYEPVLTEFFWDMVTKKNHV</sequence>
<feature type="initiator methionine" description="Removed" evidence="8">
    <location>
        <position position="1"/>
    </location>
</feature>
<feature type="chain" id="PRO_0000220839" description="Inositol-tetrakisphosphate 1-kinase 1">
    <location>
        <begin position="2"/>
        <end position="319"/>
    </location>
</feature>
<feature type="domain" description="ATP-grasp" evidence="3">
    <location>
        <begin position="99"/>
        <end position="318"/>
    </location>
</feature>
<feature type="binding site" evidence="2">
    <location>
        <position position="18"/>
    </location>
    <ligand>
        <name>1D-myo-inositol 1,3,4-trisphosphate</name>
        <dbReference type="ChEBI" id="CHEBI:58414"/>
    </ligand>
</feature>
<feature type="binding site" evidence="2">
    <location>
        <position position="60"/>
    </location>
    <ligand>
        <name>1D-myo-inositol 1,3,4-trisphosphate</name>
        <dbReference type="ChEBI" id="CHEBI:58414"/>
    </ligand>
</feature>
<feature type="binding site" evidence="1">
    <location>
        <position position="95"/>
    </location>
    <ligand>
        <name>ATP</name>
        <dbReference type="ChEBI" id="CHEBI:30616"/>
    </ligand>
</feature>
<feature type="binding site" evidence="1">
    <location>
        <position position="145"/>
    </location>
    <ligand>
        <name>ATP</name>
        <dbReference type="ChEBI" id="CHEBI:30616"/>
    </ligand>
</feature>
<feature type="binding site" evidence="2">
    <location>
        <position position="156"/>
    </location>
    <ligand>
        <name>1D-myo-inositol 1,3,4-trisphosphate</name>
        <dbReference type="ChEBI" id="CHEBI:58414"/>
    </ligand>
</feature>
<feature type="binding site" evidence="1">
    <location>
        <begin position="177"/>
        <end position="188"/>
    </location>
    <ligand>
        <name>ATP</name>
        <dbReference type="ChEBI" id="CHEBI:30616"/>
    </ligand>
</feature>
<feature type="binding site" evidence="2">
    <location>
        <position position="188"/>
    </location>
    <ligand>
        <name>1D-myo-inositol 1,3,4-trisphosphate</name>
        <dbReference type="ChEBI" id="CHEBI:58414"/>
    </ligand>
</feature>
<feature type="binding site" evidence="1">
    <location>
        <position position="203"/>
    </location>
    <ligand>
        <name>ATP</name>
        <dbReference type="ChEBI" id="CHEBI:30616"/>
    </ligand>
</feature>
<feature type="binding site" evidence="1">
    <location>
        <position position="273"/>
    </location>
    <ligand>
        <name>Mg(2+)</name>
        <dbReference type="ChEBI" id="CHEBI:18420"/>
        <label>1</label>
    </ligand>
</feature>
<feature type="binding site" evidence="1">
    <location>
        <position position="288"/>
    </location>
    <ligand>
        <name>Mg(2+)</name>
        <dbReference type="ChEBI" id="CHEBI:18420"/>
        <label>1</label>
    </ligand>
</feature>
<feature type="binding site" evidence="1">
    <location>
        <position position="288"/>
    </location>
    <ligand>
        <name>Mg(2+)</name>
        <dbReference type="ChEBI" id="CHEBI:18420"/>
        <label>2</label>
    </ligand>
</feature>
<feature type="binding site" evidence="2">
    <location>
        <position position="290"/>
    </location>
    <ligand>
        <name>1D-myo-inositol 1,3,4-trisphosphate</name>
        <dbReference type="ChEBI" id="CHEBI:58414"/>
    </ligand>
</feature>
<feature type="binding site" evidence="1">
    <location>
        <position position="290"/>
    </location>
    <ligand>
        <name>Mg(2+)</name>
        <dbReference type="ChEBI" id="CHEBI:18420"/>
        <label>2</label>
    </ligand>
</feature>
<feature type="modified residue" description="N-acetylserine" evidence="8">
    <location>
        <position position="2"/>
    </location>
</feature>
<feature type="sequence conflict" description="In Ref. 1; AAC28859." evidence="7" ref="1">
    <original>K</original>
    <variation>Q</variation>
    <location>
        <position position="197"/>
    </location>
</feature>
<name>ITPK1_ARATH</name>